<organism>
    <name type="scientific">Giardia intestinalis</name>
    <name type="common">Giardia lamblia</name>
    <dbReference type="NCBI Taxonomy" id="5741"/>
    <lineage>
        <taxon>Eukaryota</taxon>
        <taxon>Metamonada</taxon>
        <taxon>Diplomonadida</taxon>
        <taxon>Hexamitidae</taxon>
        <taxon>Giardiinae</taxon>
        <taxon>Giardia</taxon>
    </lineage>
</organism>
<comment type="function">
    <text evidence="4 5">Plays an essential role in growth and, with Dicer, also involved in microRNA (miRNA)-mediated translational repression. The RNA interference pathway is implicated in antigenic variation having a role in regulation of variant-specific surface protein (VSP)-coding gene expression. Several VSP genes are transcribed but only transcripts encoding the VSP to be expressed accumulate. Antisense RNAs corresponding to the silenced VSP genes are detected.</text>
</comment>
<comment type="subunit">
    <text evidence="4 5">Interacts with miR2. Highly specific binding to the mRNA m7G-cap. May be a component of the RNA-induced silencing complex (RISC), a sequence-specific, multicomponent nuclease that destroys or silences messenger RNAs homologous to the silencing trigger.</text>
</comment>
<comment type="subcellular location">
    <subcellularLocation>
        <location evidence="5">Cytoplasm</location>
    </subcellularLocation>
</comment>
<comment type="domain">
    <text evidence="4">PAZ domain is absent, but Ago is capable of binding small RNAs in the same way as the other Argonaute proteins.</text>
</comment>
<comment type="disruption phenotype">
    <text evidence="4 5">Inhibited cell growth due to inhibition of translation initiation. A change from single to multiple VSP expression in individual parasites.</text>
</comment>
<comment type="similarity">
    <text evidence="1">Belongs to the argonaute family. Ago subfamily.</text>
</comment>
<comment type="sequence caution" evidence="8">
    <conflict type="erroneous initiation">
        <sequence resource="EMBL-CDS" id="AAO17548"/>
    </conflict>
    <text>Truncated N-terminus.</text>
</comment>
<dbReference type="EMBL" id="AY142143">
    <property type="protein sequence ID" value="AAO17548.1"/>
    <property type="status" value="ALT_INIT"/>
    <property type="molecule type" value="Genomic_DNA"/>
</dbReference>
<dbReference type="SMR" id="Q86QW7"/>
<dbReference type="VEuPathDB" id="GiardiaDB:DHA2_152857"/>
<dbReference type="VEuPathDB" id="GiardiaDB:GL50581_2062"/>
<dbReference type="VEuPathDB" id="GiardiaDB:GL50803_002902"/>
<dbReference type="VEuPathDB" id="GiardiaDB:QR46_3996"/>
<dbReference type="eggNOG" id="KOG1042">
    <property type="taxonomic scope" value="Eukaryota"/>
</dbReference>
<dbReference type="GO" id="GO:0005737">
    <property type="term" value="C:cytoplasm"/>
    <property type="evidence" value="ECO:0007669"/>
    <property type="project" value="UniProtKB-SubCell"/>
</dbReference>
<dbReference type="GO" id="GO:0003723">
    <property type="term" value="F:RNA binding"/>
    <property type="evidence" value="ECO:0007669"/>
    <property type="project" value="UniProtKB-KW"/>
</dbReference>
<dbReference type="GO" id="GO:0030154">
    <property type="term" value="P:cell differentiation"/>
    <property type="evidence" value="ECO:0007669"/>
    <property type="project" value="UniProtKB-KW"/>
</dbReference>
<dbReference type="GO" id="GO:0006417">
    <property type="term" value="P:regulation of translation"/>
    <property type="evidence" value="ECO:0007669"/>
    <property type="project" value="UniProtKB-KW"/>
</dbReference>
<dbReference type="GO" id="GO:0031047">
    <property type="term" value="P:regulatory ncRNA-mediated gene silencing"/>
    <property type="evidence" value="ECO:0007669"/>
    <property type="project" value="UniProtKB-KW"/>
</dbReference>
<dbReference type="Gene3D" id="3.40.50.2300">
    <property type="match status" value="1"/>
</dbReference>
<dbReference type="Gene3D" id="2.170.260.10">
    <property type="entry name" value="paz domain"/>
    <property type="match status" value="1"/>
</dbReference>
<dbReference type="Gene3D" id="3.30.420.10">
    <property type="entry name" value="Ribonuclease H-like superfamily/Ribonuclease H"/>
    <property type="match status" value="1"/>
</dbReference>
<dbReference type="InterPro" id="IPR003100">
    <property type="entry name" value="PAZ_dom"/>
</dbReference>
<dbReference type="InterPro" id="IPR003165">
    <property type="entry name" value="Piwi"/>
</dbReference>
<dbReference type="InterPro" id="IPR012337">
    <property type="entry name" value="RNaseH-like_sf"/>
</dbReference>
<dbReference type="InterPro" id="IPR036397">
    <property type="entry name" value="RNaseH_sf"/>
</dbReference>
<dbReference type="PANTHER" id="PTHR22891">
    <property type="entry name" value="EUKARYOTIC TRANSLATION INITIATION FACTOR 2C"/>
    <property type="match status" value="1"/>
</dbReference>
<dbReference type="Pfam" id="PF02171">
    <property type="entry name" value="Piwi"/>
    <property type="match status" value="1"/>
</dbReference>
<dbReference type="SMART" id="SM00950">
    <property type="entry name" value="Piwi"/>
    <property type="match status" value="1"/>
</dbReference>
<dbReference type="SUPFAM" id="SSF53098">
    <property type="entry name" value="Ribonuclease H-like"/>
    <property type="match status" value="1"/>
</dbReference>
<dbReference type="PROSITE" id="PS50821">
    <property type="entry name" value="PAZ"/>
    <property type="match status" value="1"/>
</dbReference>
<dbReference type="PROSITE" id="PS50822">
    <property type="entry name" value="PIWI"/>
    <property type="match status" value="1"/>
</dbReference>
<protein>
    <recommendedName>
        <fullName evidence="6 7">Protein argonaute</fullName>
        <shortName evidence="6">GlAgo</shortName>
    </recommendedName>
</protein>
<proteinExistence type="evidence at protein level"/>
<feature type="chain" id="PRO_0000405236" description="Protein argonaute">
    <location>
        <begin position="1"/>
        <end position="781"/>
    </location>
</feature>
<feature type="domain" description="PAZ" evidence="2">
    <location>
        <begin position="110"/>
        <end position="194"/>
    </location>
</feature>
<feature type="domain" description="Piwi" evidence="3">
    <location>
        <begin position="436"/>
        <end position="760"/>
    </location>
</feature>
<reference evidence="8 9" key="1">
    <citation type="journal article" date="2008" name="Nature">
        <title>Antigenic variation in Giardia lamblia is regulated by RNA interference.</title>
        <authorList>
            <person name="Prucca C.G."/>
            <person name="Slavin I."/>
            <person name="Quiroga R."/>
            <person name="Elyas E.V."/>
            <person name="Rivero F.D."/>
            <person name="Saura A."/>
            <person name="Carranza P.G."/>
            <person name="Lujan H.D."/>
        </authorList>
    </citation>
    <scope>NUCLEOTIDE SEQUENCE [GENOMIC DNA]</scope>
    <scope>FUNCTION</scope>
    <scope>SUBUNIT</scope>
    <scope>SUBCELLULAR LOCATION</scope>
    <scope>DISRUPTION PHENOTYPE</scope>
    <source>
        <strain evidence="9">ATCC 30957 / WB</strain>
        <strain evidence="5">WB1267</strain>
        <strain evidence="5">WB9B10</strain>
    </source>
</reference>
<reference evidence="8" key="2">
    <citation type="journal article" date="2008" name="PLoS Pathog.">
        <title>snoRNA, a novel precursor of microRNA in Giardia lamblia.</title>
        <authorList>
            <person name="Saraiya A.A."/>
            <person name="Wang C.C."/>
        </authorList>
    </citation>
    <scope>FUNCTION</scope>
    <scope>RNA-BINDING</scope>
    <scope>DISRUPTION PHENOTYPE</scope>
    <source>
        <strain evidence="4">ATCC 30957 / WB</strain>
        <tissue evidence="4">Trophozoite</tissue>
    </source>
</reference>
<gene>
    <name evidence="6" type="primary">Ago</name>
</gene>
<accession>Q86QW7</accession>
<sequence length="781" mass="87540">MRNNIAGPPITPVQATVKVTRVRQMDPTDLMSMKILLNILLRRTFESSLGMLNIRSGFYDLRNPSIHAIQIDGRGYDICWIPGFRLTTATLRGKLGLQILPETTKVRSKSMNELLTERRGNIHPSALAVITVMAMHNGKVFRVHSIVQGQTIVSPLANGNETDYFTYYSTRYRDKIDSAGLSLLRHNDYCNSVMQQDKFILKLTPLKRTQNGKVVRPCNVPSSLCIIISDNEIAPYGVSKLSTNRAAVALSTMSPDALLEKATAFAARLAEDTELQSLLGDYGFGFTSNPLELETFVCKPPKLMMDNTSRIVTIEDDSGGVFHNLLQSPGVSPIYYSNNNQPATGMPVWAIMVPRNLGNDYARRLRKELTERVRSLAGTTAPNIGDPPLIAVELSNQRREMYRVEPYKDAFKALLNKLRLEYKDARESEIVAKIQLVVIVIPGPKQDRGDLYKGIKQFYTHMGIVTQCLLAPKSSQNELQWYDQAVLRSVCQQIYAKAGGAVWAPVLPPQNVYSKSTMLCALDISRPKKTVGRPAEVPISTAGFISTYDGSFEYIYSQKKTLVPNRLNHGGELQQQTLMEAFIKNSCNVYLAFNNRILPDHIVIFRDGVSDSQISATLEVEIKSLYECLRQIYHKSNRPMCDLKVIVAQKTCAMRFSAVGGTVLRSGYYVINRSPDNRQQGSEFLMASQAIVHGTTPKPIRYKIIFDSMEASVDNDSFNQLIELTNAMAYGYVNWPQAISLPHVLHMAHHLSKFCGEVLRNGDDLFESCAIFGLQYRPFFI</sequence>
<name>AGO_GIAIN</name>
<evidence type="ECO:0000255" key="1"/>
<evidence type="ECO:0000255" key="2">
    <source>
        <dbReference type="PROSITE-ProRule" id="PRU00142"/>
    </source>
</evidence>
<evidence type="ECO:0000255" key="3">
    <source>
        <dbReference type="PROSITE-ProRule" id="PRU00150"/>
    </source>
</evidence>
<evidence type="ECO:0000269" key="4">
    <source>
    </source>
</evidence>
<evidence type="ECO:0000269" key="5">
    <source>
    </source>
</evidence>
<evidence type="ECO:0000303" key="6">
    <source>
    </source>
</evidence>
<evidence type="ECO:0000303" key="7">
    <source>
    </source>
</evidence>
<evidence type="ECO:0000305" key="8"/>
<evidence type="ECO:0000312" key="9">
    <source>
        <dbReference type="EMBL" id="AAO17548.1"/>
    </source>
</evidence>
<keyword id="KW-0963">Cytoplasm</keyword>
<keyword id="KW-0217">Developmental protein</keyword>
<keyword id="KW-0221">Differentiation</keyword>
<keyword id="KW-0694">RNA-binding</keyword>
<keyword id="KW-0943">RNA-mediated gene silencing</keyword>
<keyword id="KW-0810">Translation regulation</keyword>